<evidence type="ECO:0000250" key="1">
    <source>
        <dbReference type="UniProtKB" id="P00395"/>
    </source>
</evidence>
<evidence type="ECO:0000250" key="2">
    <source>
        <dbReference type="UniProtKB" id="P00396"/>
    </source>
</evidence>
<evidence type="ECO:0000250" key="3">
    <source>
        <dbReference type="UniProtKB" id="P00401"/>
    </source>
</evidence>
<evidence type="ECO:0000305" key="4"/>
<comment type="function">
    <text evidence="3">Component of the cytochrome c oxidase, the last enzyme in the mitochondrial electron transport chain which drives oxidative phosphorylation. The respiratory chain contains 3 multisubunit complexes succinate dehydrogenase (complex II, CII), ubiquinol-cytochrome c oxidoreductase (cytochrome b-c1 complex, complex III, CIII) and cytochrome c oxidase (complex IV, CIV), that cooperate to transfer electrons derived from NADH and succinate to molecular oxygen, creating an electrochemical gradient over the inner membrane that drives transmembrane transport and the ATP synthase. Cytochrome c oxidase is the component of the respiratory chain that catalyzes the reduction of oxygen to water. Electrons originating from reduced cytochrome c in the intermembrane space (IMS) are transferred via the dinuclear copper A center (CU(A)) of subunit 2 and heme A of subunit 1 to the active site in subunit 1, a binuclear center (BNC) formed by heme A3 and copper B (CU(B)). The BNC reduces molecular oxygen to 2 water molecules using 4 electrons from cytochrome c in the IMS and 4 protons from the mitochondrial matrix.</text>
</comment>
<comment type="catalytic activity">
    <reaction evidence="3">
        <text>4 Fe(II)-[cytochrome c] + O2 + 8 H(+)(in) = 4 Fe(III)-[cytochrome c] + 2 H2O + 4 H(+)(out)</text>
        <dbReference type="Rhea" id="RHEA:11436"/>
        <dbReference type="Rhea" id="RHEA-COMP:10350"/>
        <dbReference type="Rhea" id="RHEA-COMP:14399"/>
        <dbReference type="ChEBI" id="CHEBI:15377"/>
        <dbReference type="ChEBI" id="CHEBI:15378"/>
        <dbReference type="ChEBI" id="CHEBI:15379"/>
        <dbReference type="ChEBI" id="CHEBI:29033"/>
        <dbReference type="ChEBI" id="CHEBI:29034"/>
        <dbReference type="EC" id="7.1.1.9"/>
    </reaction>
    <physiologicalReaction direction="left-to-right" evidence="3">
        <dbReference type="Rhea" id="RHEA:11437"/>
    </physiologicalReaction>
</comment>
<comment type="cofactor">
    <cofactor evidence="2">
        <name>heme</name>
        <dbReference type="ChEBI" id="CHEBI:30413"/>
    </cofactor>
    <text evidence="2">Binds 2 heme A groups non-covalently per subunit.</text>
</comment>
<comment type="cofactor">
    <cofactor evidence="2">
        <name>Cu cation</name>
        <dbReference type="ChEBI" id="CHEBI:23378"/>
    </cofactor>
    <text evidence="2">Binds a copper B center.</text>
</comment>
<comment type="pathway">
    <text evidence="3">Energy metabolism; oxidative phosphorylation.</text>
</comment>
<comment type="subunit">
    <text evidence="1 2">Component of the cytochrome c oxidase (complex IV, CIV), a multisubunit enzyme composed of 14 subunits. The complex is composed of a catalytic core of 3 subunits MT-CO1, MT-CO2 and MT-CO3, encoded in the mitochondrial DNA, and 11 supernumerary subunits COX4I, COX5A, COX5B, COX6A, COX6B, COX6C, COX7A, COX7B, COX7C, COX8 and NDUFA4, which are encoded in the nuclear genome. The complex exists as a monomer or a dimer and forms supercomplexes (SCs) in the inner mitochondrial membrane with NADH-ubiquinone oxidoreductase (complex I, CI) and ubiquinol-cytochrome c oxidoreductase (cytochrome b-c1 complex, complex III, CIII), resulting in different assemblies (supercomplex SCI(1)III(2)IV(1) and megacomplex MCI(2)III(2)IV(2)) (By similarity). As a newly synthesized protein, rapidly incorporates into a multi-subunit assembly intermediate in the inner membrane, called MITRAC (mitochondrial translation regulation assembly intermediate of cytochrome c oxidase) complex, whose core components are COA3/MITRAC12 and COX14. Within the MITRAC complex, interacts with COA3 and with SMIM20/MITRAC7; the interaction with SMIM20 stabilizes the newly synthesized MT-CO1 and prevents its premature turnover. Interacts with TMEM177 in a COX20-dependent manner (By similarity).</text>
</comment>
<comment type="subcellular location">
    <subcellularLocation>
        <location evidence="2">Mitochondrion inner membrane</location>
        <topology evidence="2">Multi-pass membrane protein</topology>
    </subcellularLocation>
</comment>
<comment type="similarity">
    <text evidence="4">Belongs to the heme-copper respiratory oxidase family.</text>
</comment>
<geneLocation type="mitochondrion"/>
<organism>
    <name type="scientific">Pan troglodytes</name>
    <name type="common">Chimpanzee</name>
    <dbReference type="NCBI Taxonomy" id="9598"/>
    <lineage>
        <taxon>Eukaryota</taxon>
        <taxon>Metazoa</taxon>
        <taxon>Chordata</taxon>
        <taxon>Craniata</taxon>
        <taxon>Vertebrata</taxon>
        <taxon>Euteleostomi</taxon>
        <taxon>Mammalia</taxon>
        <taxon>Eutheria</taxon>
        <taxon>Euarchontoglires</taxon>
        <taxon>Primates</taxon>
        <taxon>Haplorrhini</taxon>
        <taxon>Catarrhini</taxon>
        <taxon>Hominidae</taxon>
        <taxon>Pan</taxon>
    </lineage>
</organism>
<gene>
    <name type="primary">MT-CO1</name>
    <name type="synonym">COI</name>
    <name type="synonym">COXI</name>
    <name type="synonym">MTCO1</name>
</gene>
<dbReference type="EC" id="7.1.1.9"/>
<dbReference type="EMBL" id="D38113">
    <property type="protein sequence ID" value="BAA85270.1"/>
    <property type="molecule type" value="Genomic_DNA"/>
</dbReference>
<dbReference type="SMR" id="Q9T9W1"/>
<dbReference type="FunCoup" id="Q9T9W1">
    <property type="interactions" value="218"/>
</dbReference>
<dbReference type="STRING" id="9598.ENSPTRP00000061408"/>
<dbReference type="PaxDb" id="9598-ENSPTRP00000061408"/>
<dbReference type="Ensembl" id="ENSPTRT00000076402.1">
    <property type="protein sequence ID" value="ENSPTRP00000061408.1"/>
    <property type="gene ID" value="ENSPTRG00000042657.1"/>
</dbReference>
<dbReference type="KEGG" id="ptr:807866"/>
<dbReference type="CTD" id="4512"/>
<dbReference type="VGNC" id="VGNC:11714">
    <property type="gene designation" value="MT-CO1"/>
</dbReference>
<dbReference type="eggNOG" id="KOG4769">
    <property type="taxonomic scope" value="Eukaryota"/>
</dbReference>
<dbReference type="GeneTree" id="ENSGT00390000001518"/>
<dbReference type="HOGENOM" id="CLU_011899_7_3_1"/>
<dbReference type="InParanoid" id="Q9T9W1"/>
<dbReference type="OMA" id="WAMMSIG"/>
<dbReference type="UniPathway" id="UPA00705"/>
<dbReference type="Proteomes" id="UP000002277">
    <property type="component" value="Mitochondrion"/>
</dbReference>
<dbReference type="Bgee" id="ENSPTRG00000042657">
    <property type="expression patterns" value="Expressed in hindlimb stylopod muscle and 20 other cell types or tissues"/>
</dbReference>
<dbReference type="GO" id="GO:0005743">
    <property type="term" value="C:mitochondrial inner membrane"/>
    <property type="evidence" value="ECO:0007669"/>
    <property type="project" value="UniProtKB-SubCell"/>
</dbReference>
<dbReference type="GO" id="GO:0045277">
    <property type="term" value="C:respiratory chain complex IV"/>
    <property type="evidence" value="ECO:0000250"/>
    <property type="project" value="UniProtKB"/>
</dbReference>
<dbReference type="GO" id="GO:0004129">
    <property type="term" value="F:cytochrome-c oxidase activity"/>
    <property type="evidence" value="ECO:0007669"/>
    <property type="project" value="UniProtKB-EC"/>
</dbReference>
<dbReference type="GO" id="GO:0020037">
    <property type="term" value="F:heme binding"/>
    <property type="evidence" value="ECO:0007669"/>
    <property type="project" value="InterPro"/>
</dbReference>
<dbReference type="GO" id="GO:0046872">
    <property type="term" value="F:metal ion binding"/>
    <property type="evidence" value="ECO:0007669"/>
    <property type="project" value="UniProtKB-KW"/>
</dbReference>
<dbReference type="GO" id="GO:0009060">
    <property type="term" value="P:aerobic respiration"/>
    <property type="evidence" value="ECO:0000318"/>
    <property type="project" value="GO_Central"/>
</dbReference>
<dbReference type="GO" id="GO:0006119">
    <property type="term" value="P:oxidative phosphorylation"/>
    <property type="evidence" value="ECO:0007669"/>
    <property type="project" value="UniProtKB-UniPathway"/>
</dbReference>
<dbReference type="GO" id="GO:0022904">
    <property type="term" value="P:respiratory electron transport chain"/>
    <property type="evidence" value="ECO:0000318"/>
    <property type="project" value="GO_Central"/>
</dbReference>
<dbReference type="CDD" id="cd01663">
    <property type="entry name" value="Cyt_c_Oxidase_I"/>
    <property type="match status" value="1"/>
</dbReference>
<dbReference type="FunFam" id="1.20.210.10:FF:000001">
    <property type="entry name" value="Cytochrome c oxidase subunit 1"/>
    <property type="match status" value="1"/>
</dbReference>
<dbReference type="Gene3D" id="1.20.210.10">
    <property type="entry name" value="Cytochrome c oxidase-like, subunit I domain"/>
    <property type="match status" value="1"/>
</dbReference>
<dbReference type="InterPro" id="IPR023616">
    <property type="entry name" value="Cyt_c_oxase-like_su1_dom"/>
</dbReference>
<dbReference type="InterPro" id="IPR036927">
    <property type="entry name" value="Cyt_c_oxase-like_su1_sf"/>
</dbReference>
<dbReference type="InterPro" id="IPR000883">
    <property type="entry name" value="Cyt_C_Oxase_1"/>
</dbReference>
<dbReference type="InterPro" id="IPR023615">
    <property type="entry name" value="Cyt_c_Oxase_su1_BS"/>
</dbReference>
<dbReference type="InterPro" id="IPR033944">
    <property type="entry name" value="Cyt_c_oxase_su1_dom"/>
</dbReference>
<dbReference type="PANTHER" id="PTHR10422">
    <property type="entry name" value="CYTOCHROME C OXIDASE SUBUNIT 1"/>
    <property type="match status" value="1"/>
</dbReference>
<dbReference type="PANTHER" id="PTHR10422:SF18">
    <property type="entry name" value="CYTOCHROME C OXIDASE SUBUNIT 1"/>
    <property type="match status" value="1"/>
</dbReference>
<dbReference type="Pfam" id="PF00115">
    <property type="entry name" value="COX1"/>
    <property type="match status" value="1"/>
</dbReference>
<dbReference type="PRINTS" id="PR01165">
    <property type="entry name" value="CYCOXIDASEI"/>
</dbReference>
<dbReference type="SUPFAM" id="SSF81442">
    <property type="entry name" value="Cytochrome c oxidase subunit I-like"/>
    <property type="match status" value="1"/>
</dbReference>
<dbReference type="PROSITE" id="PS50855">
    <property type="entry name" value="COX1"/>
    <property type="match status" value="1"/>
</dbReference>
<dbReference type="PROSITE" id="PS00077">
    <property type="entry name" value="COX1_CUB"/>
    <property type="match status" value="1"/>
</dbReference>
<accession>Q9T9W1</accession>
<name>COX1_PANTR</name>
<protein>
    <recommendedName>
        <fullName>Cytochrome c oxidase subunit 1</fullName>
        <ecNumber>7.1.1.9</ecNumber>
    </recommendedName>
    <alternativeName>
        <fullName>Cytochrome c oxidase polypeptide I</fullName>
    </alternativeName>
</protein>
<feature type="chain" id="PRO_0000183379" description="Cytochrome c oxidase subunit 1">
    <location>
        <begin position="1"/>
        <end position="513"/>
    </location>
</feature>
<feature type="topological domain" description="Mitochondrial matrix" evidence="2">
    <location>
        <begin position="1"/>
        <end position="11"/>
    </location>
</feature>
<feature type="transmembrane region" description="Helical; Name=I" evidence="2">
    <location>
        <begin position="12"/>
        <end position="40"/>
    </location>
</feature>
<feature type="topological domain" description="Mitochondrial intermembrane" evidence="2">
    <location>
        <begin position="41"/>
        <end position="50"/>
    </location>
</feature>
<feature type="transmembrane region" description="Helical; Name=II" evidence="2">
    <location>
        <begin position="51"/>
        <end position="86"/>
    </location>
</feature>
<feature type="topological domain" description="Mitochondrial matrix" evidence="2">
    <location>
        <begin position="87"/>
        <end position="94"/>
    </location>
</feature>
<feature type="transmembrane region" description="Helical; Name=III" evidence="2">
    <location>
        <begin position="95"/>
        <end position="117"/>
    </location>
</feature>
<feature type="topological domain" description="Mitochondrial intermembrane" evidence="2">
    <location>
        <begin position="118"/>
        <end position="140"/>
    </location>
</feature>
<feature type="transmembrane region" description="Helical; Name=IV" evidence="2">
    <location>
        <begin position="141"/>
        <end position="170"/>
    </location>
</feature>
<feature type="topological domain" description="Mitochondrial matrix" evidence="2">
    <location>
        <begin position="171"/>
        <end position="182"/>
    </location>
</feature>
<feature type="transmembrane region" description="Helical; Name=V" evidence="2">
    <location>
        <begin position="183"/>
        <end position="212"/>
    </location>
</feature>
<feature type="topological domain" description="Mitochondrial intermembrane" evidence="2">
    <location>
        <begin position="213"/>
        <end position="227"/>
    </location>
</feature>
<feature type="transmembrane region" description="Helical; Name=VI" evidence="2">
    <location>
        <begin position="228"/>
        <end position="261"/>
    </location>
</feature>
<feature type="topological domain" description="Mitochondrial matrix" evidence="2">
    <location>
        <begin position="262"/>
        <end position="269"/>
    </location>
</feature>
<feature type="transmembrane region" description="Helical; Name=VII" evidence="2">
    <location>
        <begin position="270"/>
        <end position="286"/>
    </location>
</feature>
<feature type="topological domain" description="Mitochondrial intermembrane" evidence="2">
    <location>
        <begin position="287"/>
        <end position="298"/>
    </location>
</feature>
<feature type="transmembrane region" description="Helical; Name=VIII" evidence="2">
    <location>
        <begin position="299"/>
        <end position="327"/>
    </location>
</feature>
<feature type="topological domain" description="Mitochondrial matrix" evidence="2">
    <location>
        <begin position="328"/>
        <end position="335"/>
    </location>
</feature>
<feature type="transmembrane region" description="Helical; Name=IX" evidence="2">
    <location>
        <begin position="336"/>
        <end position="357"/>
    </location>
</feature>
<feature type="topological domain" description="Mitochondrial intermembrane" evidence="2">
    <location>
        <begin position="358"/>
        <end position="370"/>
    </location>
</feature>
<feature type="transmembrane region" description="Helical; Name=X" evidence="2">
    <location>
        <begin position="371"/>
        <end position="400"/>
    </location>
</feature>
<feature type="topological domain" description="Mitochondrial matrix" evidence="2">
    <location>
        <begin position="401"/>
        <end position="406"/>
    </location>
</feature>
<feature type="transmembrane region" description="Helical; Name=XI" evidence="2">
    <location>
        <begin position="407"/>
        <end position="433"/>
    </location>
</feature>
<feature type="topological domain" description="Mitochondrial intermembrane" evidence="2">
    <location>
        <begin position="434"/>
        <end position="446"/>
    </location>
</feature>
<feature type="transmembrane region" description="Helical; Name=XII" evidence="2">
    <location>
        <begin position="447"/>
        <end position="478"/>
    </location>
</feature>
<feature type="topological domain" description="Mitochondrial matrix" evidence="2">
    <location>
        <begin position="479"/>
        <end position="513"/>
    </location>
</feature>
<feature type="binding site" evidence="2">
    <location>
        <position position="40"/>
    </location>
    <ligand>
        <name>Na(+)</name>
        <dbReference type="ChEBI" id="CHEBI:29101"/>
    </ligand>
</feature>
<feature type="binding site" evidence="2">
    <location>
        <position position="45"/>
    </location>
    <ligand>
        <name>Na(+)</name>
        <dbReference type="ChEBI" id="CHEBI:29101"/>
    </ligand>
</feature>
<feature type="binding site" description="axial binding residue" evidence="2">
    <location>
        <position position="61"/>
    </location>
    <ligand>
        <name>Fe(II)-heme a</name>
        <dbReference type="ChEBI" id="CHEBI:61715"/>
        <note>low-spin</note>
    </ligand>
    <ligandPart>
        <name>Fe</name>
        <dbReference type="ChEBI" id="CHEBI:18248"/>
    </ligandPart>
</feature>
<feature type="binding site" evidence="2">
    <location>
        <position position="240"/>
    </location>
    <ligand>
        <name>Cu cation</name>
        <dbReference type="ChEBI" id="CHEBI:23378"/>
        <label>B</label>
    </ligand>
</feature>
<feature type="binding site" evidence="2">
    <location>
        <position position="244"/>
    </location>
    <ligand>
        <name>O2</name>
        <dbReference type="ChEBI" id="CHEBI:15379"/>
    </ligand>
</feature>
<feature type="binding site" evidence="2">
    <location>
        <position position="290"/>
    </location>
    <ligand>
        <name>Cu cation</name>
        <dbReference type="ChEBI" id="CHEBI:23378"/>
        <label>B</label>
    </ligand>
</feature>
<feature type="binding site" evidence="2">
    <location>
        <position position="291"/>
    </location>
    <ligand>
        <name>Cu cation</name>
        <dbReference type="ChEBI" id="CHEBI:23378"/>
        <label>B</label>
    </ligand>
</feature>
<feature type="binding site" evidence="2">
    <location>
        <position position="368"/>
    </location>
    <ligand>
        <name>Mg(2+)</name>
        <dbReference type="ChEBI" id="CHEBI:18420"/>
        <note>ligand shared with MT-CO2</note>
    </ligand>
</feature>
<feature type="binding site" evidence="2">
    <location>
        <position position="369"/>
    </location>
    <ligand>
        <name>Mg(2+)</name>
        <dbReference type="ChEBI" id="CHEBI:18420"/>
        <note>ligand shared with MT-CO2</note>
    </ligand>
</feature>
<feature type="binding site" description="axial binding residue" evidence="2">
    <location>
        <position position="376"/>
    </location>
    <ligand>
        <name>heme a3</name>
        <dbReference type="ChEBI" id="CHEBI:83282"/>
        <note>high-spin</note>
    </ligand>
    <ligandPart>
        <name>Fe</name>
        <dbReference type="ChEBI" id="CHEBI:18248"/>
    </ligandPart>
</feature>
<feature type="binding site" description="axial binding residue" evidence="2">
    <location>
        <position position="378"/>
    </location>
    <ligand>
        <name>Fe(II)-heme a</name>
        <dbReference type="ChEBI" id="CHEBI:61715"/>
        <note>low-spin</note>
    </ligand>
    <ligandPart>
        <name>Fe</name>
        <dbReference type="ChEBI" id="CHEBI:18248"/>
    </ligandPart>
</feature>
<feature type="binding site" evidence="2">
    <location>
        <position position="441"/>
    </location>
    <ligand>
        <name>Na(+)</name>
        <dbReference type="ChEBI" id="CHEBI:29101"/>
    </ligand>
</feature>
<feature type="cross-link" description="1'-histidyl-3'-tyrosine (His-Tyr)" evidence="2">
    <location>
        <begin position="240"/>
        <end position="244"/>
    </location>
</feature>
<reference key="1">
    <citation type="journal article" date="1995" name="Proc. Natl. Acad. Sci. U.S.A.">
        <title>Recent African origin of modern humans revealed by complete sequences of hominoid mitochondrial DNAs.</title>
        <authorList>
            <person name="Horai S."/>
            <person name="Hayasaka K."/>
            <person name="Kondo R."/>
            <person name="Tsugane K."/>
            <person name="Takahata N."/>
        </authorList>
    </citation>
    <scope>NUCLEOTIDE SEQUENCE [GENOMIC DNA]</scope>
</reference>
<keyword id="KW-0106">Calcium</keyword>
<keyword id="KW-0186">Copper</keyword>
<keyword id="KW-0249">Electron transport</keyword>
<keyword id="KW-0349">Heme</keyword>
<keyword id="KW-0408">Iron</keyword>
<keyword id="KW-0460">Magnesium</keyword>
<keyword id="KW-0472">Membrane</keyword>
<keyword id="KW-0479">Metal-binding</keyword>
<keyword id="KW-0496">Mitochondrion</keyword>
<keyword id="KW-0999">Mitochondrion inner membrane</keyword>
<keyword id="KW-1185">Reference proteome</keyword>
<keyword id="KW-0679">Respiratory chain</keyword>
<keyword id="KW-0915">Sodium</keyword>
<keyword id="KW-1278">Translocase</keyword>
<keyword id="KW-0812">Transmembrane</keyword>
<keyword id="KW-1133">Transmembrane helix</keyword>
<keyword id="KW-0813">Transport</keyword>
<proteinExistence type="inferred from homology"/>
<sequence length="513" mass="56972">MFTDRWLFSTNHKDIGTLYLLFGAWAGVLGTALSLLIRAELGQPGNLLGNDHIYNVIVTAHAFVMIFFMVMPIMIGGFGNWLVPLMIGAPDMAFPRMNNMSFWLLPPSLLLLLASAMVEAGAGTGWTVYPPLAGNYSHPGASVDLTIFSLHLAGISSILGAINFITTIINMKPPAMTQYQTPLFVWSVLITAVLLLLSLPVLAAGITMLLTDRNLNTTFFDPAGGGDPILYQHLFWFFGHPEVYILILPGFGMISHIVTYYSGKKEPFGYMGMVWAMMSIGFLGFIVWAHHMFTVGMDVDTRAYFTSATMIIAIPTGVKVFSWLATLHGSNMKWSAAVLWALGFIFLFTVGGLTGIVLANSSLDIVLHDTYYVVAHFHYVLSMGAVFAIMGGFIHWFPLFSGYTLDQTYAKIQFAIMFIGVNLTFFPQHFLGLSGMPRRYSDYPDAYTTWNVLSSVGSFISLTAVMLMIFMIWEAFASKRKVLMVEEPSANLEWLYGCPPPYHTFEEPVYMKS</sequence>